<sequence>MEALHQKIREEGIVLSDQVLKVDAFLNHQIDPALMQLIGDEFARLFADAGVTKIVTIEASGIAPAVMTGLKLGVPVIFARKHQSLTLTENLLTASVYSFTKQTENTVAISPRHLNSSDRVLVIDDFLANGKASQALISIIKQAGATVAGLGIVIEKSFQGGRAELDSQGYRVESLARVKSLEGGVVSFIE</sequence>
<proteinExistence type="inferred from homology"/>
<gene>
    <name evidence="1" type="primary">xpt</name>
    <name type="ordered locus">PputGB1_5317</name>
</gene>
<organism>
    <name type="scientific">Pseudomonas putida (strain GB-1)</name>
    <dbReference type="NCBI Taxonomy" id="76869"/>
    <lineage>
        <taxon>Bacteria</taxon>
        <taxon>Pseudomonadati</taxon>
        <taxon>Pseudomonadota</taxon>
        <taxon>Gammaproteobacteria</taxon>
        <taxon>Pseudomonadales</taxon>
        <taxon>Pseudomonadaceae</taxon>
        <taxon>Pseudomonas</taxon>
    </lineage>
</organism>
<dbReference type="EC" id="2.4.2.22" evidence="1"/>
<dbReference type="EMBL" id="CP000926">
    <property type="protein sequence ID" value="ABZ01199.1"/>
    <property type="molecule type" value="Genomic_DNA"/>
</dbReference>
<dbReference type="RefSeq" id="WP_003253535.1">
    <property type="nucleotide sequence ID" value="NC_010322.1"/>
</dbReference>
<dbReference type="SMR" id="B0KQ69"/>
<dbReference type="KEGG" id="ppg:PputGB1_5317"/>
<dbReference type="eggNOG" id="COG0503">
    <property type="taxonomic scope" value="Bacteria"/>
</dbReference>
<dbReference type="HOGENOM" id="CLU_099015_0_0_6"/>
<dbReference type="UniPathway" id="UPA00602">
    <property type="reaction ID" value="UER00658"/>
</dbReference>
<dbReference type="Proteomes" id="UP000002157">
    <property type="component" value="Chromosome"/>
</dbReference>
<dbReference type="GO" id="GO:0005737">
    <property type="term" value="C:cytoplasm"/>
    <property type="evidence" value="ECO:0007669"/>
    <property type="project" value="UniProtKB-SubCell"/>
</dbReference>
<dbReference type="GO" id="GO:0000310">
    <property type="term" value="F:xanthine phosphoribosyltransferase activity"/>
    <property type="evidence" value="ECO:0007669"/>
    <property type="project" value="UniProtKB-UniRule"/>
</dbReference>
<dbReference type="GO" id="GO:0006166">
    <property type="term" value="P:purine ribonucleoside salvage"/>
    <property type="evidence" value="ECO:0007669"/>
    <property type="project" value="UniProtKB-KW"/>
</dbReference>
<dbReference type="GO" id="GO:0046110">
    <property type="term" value="P:xanthine metabolic process"/>
    <property type="evidence" value="ECO:0007669"/>
    <property type="project" value="InterPro"/>
</dbReference>
<dbReference type="GO" id="GO:0032265">
    <property type="term" value="P:XMP salvage"/>
    <property type="evidence" value="ECO:0007669"/>
    <property type="project" value="UniProtKB-UniRule"/>
</dbReference>
<dbReference type="CDD" id="cd06223">
    <property type="entry name" value="PRTases_typeI"/>
    <property type="match status" value="1"/>
</dbReference>
<dbReference type="FunFam" id="3.40.50.2020:FF:000027">
    <property type="entry name" value="Xanthine phosphoribosyltransferase"/>
    <property type="match status" value="1"/>
</dbReference>
<dbReference type="Gene3D" id="3.40.50.2020">
    <property type="match status" value="1"/>
</dbReference>
<dbReference type="HAMAP" id="MF_01184">
    <property type="entry name" value="XPRTase"/>
    <property type="match status" value="1"/>
</dbReference>
<dbReference type="InterPro" id="IPR000836">
    <property type="entry name" value="PRibTrfase_dom"/>
</dbReference>
<dbReference type="InterPro" id="IPR029057">
    <property type="entry name" value="PRTase-like"/>
</dbReference>
<dbReference type="InterPro" id="IPR050118">
    <property type="entry name" value="Pur/Pyrimidine_PRTase"/>
</dbReference>
<dbReference type="InterPro" id="IPR010079">
    <property type="entry name" value="Xanthine_PRibTrfase"/>
</dbReference>
<dbReference type="NCBIfam" id="NF006671">
    <property type="entry name" value="PRK09219.1"/>
    <property type="match status" value="1"/>
</dbReference>
<dbReference type="NCBIfam" id="TIGR01744">
    <property type="entry name" value="XPRTase"/>
    <property type="match status" value="1"/>
</dbReference>
<dbReference type="PANTHER" id="PTHR43864">
    <property type="entry name" value="HYPOXANTHINE/GUANINE PHOSPHORIBOSYLTRANSFERASE"/>
    <property type="match status" value="1"/>
</dbReference>
<dbReference type="PANTHER" id="PTHR43864:SF1">
    <property type="entry name" value="XANTHINE PHOSPHORIBOSYLTRANSFERASE"/>
    <property type="match status" value="1"/>
</dbReference>
<dbReference type="SUPFAM" id="SSF53271">
    <property type="entry name" value="PRTase-like"/>
    <property type="match status" value="1"/>
</dbReference>
<name>XPT_PSEPG</name>
<protein>
    <recommendedName>
        <fullName evidence="1">Xanthine phosphoribosyltransferase</fullName>
        <shortName evidence="1">XPRTase</shortName>
        <ecNumber evidence="1">2.4.2.22</ecNumber>
    </recommendedName>
</protein>
<feature type="chain" id="PRO_0000339735" description="Xanthine phosphoribosyltransferase">
    <location>
        <begin position="1"/>
        <end position="190"/>
    </location>
</feature>
<feature type="binding site" evidence="1">
    <location>
        <position position="20"/>
    </location>
    <ligand>
        <name>xanthine</name>
        <dbReference type="ChEBI" id="CHEBI:17712"/>
    </ligand>
</feature>
<feature type="binding site" evidence="1">
    <location>
        <position position="27"/>
    </location>
    <ligand>
        <name>xanthine</name>
        <dbReference type="ChEBI" id="CHEBI:17712"/>
    </ligand>
</feature>
<feature type="binding site" evidence="1">
    <location>
        <begin position="128"/>
        <end position="132"/>
    </location>
    <ligand>
        <name>5-phospho-alpha-D-ribose 1-diphosphate</name>
        <dbReference type="ChEBI" id="CHEBI:58017"/>
    </ligand>
</feature>
<feature type="binding site" evidence="1">
    <location>
        <position position="156"/>
    </location>
    <ligand>
        <name>xanthine</name>
        <dbReference type="ChEBI" id="CHEBI:17712"/>
    </ligand>
</feature>
<evidence type="ECO:0000255" key="1">
    <source>
        <dbReference type="HAMAP-Rule" id="MF_01184"/>
    </source>
</evidence>
<accession>B0KQ69</accession>
<comment type="function">
    <text evidence="1">Converts the preformed base xanthine, a product of nucleic acid breakdown, to xanthosine 5'-monophosphate (XMP), so it can be reused for RNA or DNA synthesis.</text>
</comment>
<comment type="catalytic activity">
    <reaction evidence="1">
        <text>XMP + diphosphate = xanthine + 5-phospho-alpha-D-ribose 1-diphosphate</text>
        <dbReference type="Rhea" id="RHEA:10800"/>
        <dbReference type="ChEBI" id="CHEBI:17712"/>
        <dbReference type="ChEBI" id="CHEBI:33019"/>
        <dbReference type="ChEBI" id="CHEBI:57464"/>
        <dbReference type="ChEBI" id="CHEBI:58017"/>
        <dbReference type="EC" id="2.4.2.22"/>
    </reaction>
</comment>
<comment type="pathway">
    <text evidence="1">Purine metabolism; XMP biosynthesis via salvage pathway; XMP from xanthine: step 1/1.</text>
</comment>
<comment type="subunit">
    <text evidence="1">Homodimer.</text>
</comment>
<comment type="subcellular location">
    <subcellularLocation>
        <location evidence="1">Cytoplasm</location>
    </subcellularLocation>
</comment>
<comment type="similarity">
    <text evidence="1">Belongs to the purine/pyrimidine phosphoribosyltransferase family. Xpt subfamily.</text>
</comment>
<reference key="1">
    <citation type="submission" date="2008-01" db="EMBL/GenBank/DDBJ databases">
        <title>Complete sequence of Pseudomonas putida GB-1.</title>
        <authorList>
            <consortium name="US DOE Joint Genome Institute"/>
            <person name="Copeland A."/>
            <person name="Lucas S."/>
            <person name="Lapidus A."/>
            <person name="Barry K."/>
            <person name="Glavina del Rio T."/>
            <person name="Dalin E."/>
            <person name="Tice H."/>
            <person name="Pitluck S."/>
            <person name="Bruce D."/>
            <person name="Goodwin L."/>
            <person name="Chertkov O."/>
            <person name="Brettin T."/>
            <person name="Detter J.C."/>
            <person name="Han C."/>
            <person name="Kuske C.R."/>
            <person name="Schmutz J."/>
            <person name="Larimer F."/>
            <person name="Land M."/>
            <person name="Hauser L."/>
            <person name="Kyrpides N."/>
            <person name="Kim E."/>
            <person name="McCarthy J.K."/>
            <person name="Richardson P."/>
        </authorList>
    </citation>
    <scope>NUCLEOTIDE SEQUENCE [LARGE SCALE GENOMIC DNA]</scope>
    <source>
        <strain>GB-1</strain>
    </source>
</reference>
<keyword id="KW-0963">Cytoplasm</keyword>
<keyword id="KW-0328">Glycosyltransferase</keyword>
<keyword id="KW-0660">Purine salvage</keyword>
<keyword id="KW-0808">Transferase</keyword>